<organism>
    <name type="scientific">Arabidopsis thaliana</name>
    <name type="common">Mouse-ear cress</name>
    <dbReference type="NCBI Taxonomy" id="3702"/>
    <lineage>
        <taxon>Eukaryota</taxon>
        <taxon>Viridiplantae</taxon>
        <taxon>Streptophyta</taxon>
        <taxon>Embryophyta</taxon>
        <taxon>Tracheophyta</taxon>
        <taxon>Spermatophyta</taxon>
        <taxon>Magnoliopsida</taxon>
        <taxon>eudicotyledons</taxon>
        <taxon>Gunneridae</taxon>
        <taxon>Pentapetalae</taxon>
        <taxon>rosids</taxon>
        <taxon>malvids</taxon>
        <taxon>Brassicales</taxon>
        <taxon>Brassicaceae</taxon>
        <taxon>Camelineae</taxon>
        <taxon>Arabidopsis</taxon>
    </lineage>
</organism>
<evidence type="ECO:0000250" key="1"/>
<evidence type="ECO:0000255" key="2"/>
<evidence type="ECO:0000269" key="3">
    <source>
    </source>
</evidence>
<evidence type="ECO:0000269" key="4">
    <source>
    </source>
</evidence>
<evidence type="ECO:0000269" key="5">
    <source>
    </source>
</evidence>
<evidence type="ECO:0000269" key="6">
    <source>
    </source>
</evidence>
<evidence type="ECO:0000269" key="7">
    <source>
    </source>
</evidence>
<evidence type="ECO:0000269" key="8">
    <source>
    </source>
</evidence>
<evidence type="ECO:0000269" key="9">
    <source>
    </source>
</evidence>
<evidence type="ECO:0000269" key="10">
    <source>
    </source>
</evidence>
<evidence type="ECO:0000269" key="11">
    <source>
    </source>
</evidence>
<evidence type="ECO:0000269" key="12">
    <source>
    </source>
</evidence>
<evidence type="ECO:0000305" key="13"/>
<evidence type="ECO:0007829" key="14">
    <source>
        <dbReference type="PDB" id="2OG2"/>
    </source>
</evidence>
<evidence type="ECO:0007829" key="15">
    <source>
        <dbReference type="PDB" id="3B9Q"/>
    </source>
</evidence>
<name>CFTSY_ARATH</name>
<protein>
    <recommendedName>
        <fullName>Cell division protein FtsY homolog, chloroplastic</fullName>
    </recommendedName>
    <alternativeName>
        <fullName>Chloroplast SRP receptor homolog, alpha subunit CpFtsY</fullName>
    </alternativeName>
    <alternativeName>
        <fullName>Fused signal recognition particle receptor</fullName>
    </alternativeName>
</protein>
<proteinExistence type="evidence at protein level"/>
<sequence>MATSSAHLSFLAGRISPFSSERIGLFPLRGEFRPRMTRFRCSAGPSGFFTRLGRLIKEKAKSDVEKVFSGFSKTRENLAVIDELLLFWNLAETDRVLDELEEALLVSDFGPKITVRIVERLREDIMSGKLKSGSEIKDALKESVLEMLAKKNSKTELQLGFRKPAVIMIVGVNGGGKTTSLGKLAHRLKNEGTKVLMAAGDTFRAAASDQLEIWAERTGCEIVVAEGDKAKAATVLSKAVKRGKEEGYDVVLCDTSGRLHTNYSLMEELIACKKAVGKIVSGAPNEILLVLDGNTGLNMLPQAREFNEVVGITGLILTKLDGSARGGCVVSVVEELGIPVKFIGVGEAVEDLQPFDPEAFVNAIFS</sequence>
<keyword id="KW-0002">3D-structure</keyword>
<keyword id="KW-0150">Chloroplast</keyword>
<keyword id="KW-0342">GTP-binding</keyword>
<keyword id="KW-0472">Membrane</keyword>
<keyword id="KW-0479">Metal-binding</keyword>
<keyword id="KW-0547">Nucleotide-binding</keyword>
<keyword id="KW-0934">Plastid</keyword>
<keyword id="KW-0675">Receptor</keyword>
<keyword id="KW-1185">Reference proteome</keyword>
<keyword id="KW-0793">Thylakoid</keyword>
<keyword id="KW-0809">Transit peptide</keyword>
<gene>
    <name type="primary">CPFTSY</name>
    <name type="synonym">FTSY</name>
    <name type="ordered locus">At2g45770</name>
    <name type="ORF">F4I18.25</name>
</gene>
<feature type="transit peptide" description="Chloroplast" evidence="2">
    <location>
        <begin position="1"/>
        <end position="40"/>
    </location>
</feature>
<feature type="chain" id="PRO_0000413416" description="Cell division protein FtsY homolog, chloroplastic">
    <location>
        <begin position="41"/>
        <end position="366"/>
    </location>
</feature>
<feature type="binding site" evidence="1">
    <location>
        <begin position="171"/>
        <end position="178"/>
    </location>
    <ligand>
        <name>GTP</name>
        <dbReference type="ChEBI" id="CHEBI:37565"/>
    </ligand>
</feature>
<feature type="binding site" evidence="1">
    <location>
        <begin position="254"/>
        <end position="258"/>
    </location>
    <ligand>
        <name>GTP</name>
        <dbReference type="ChEBI" id="CHEBI:37565"/>
    </ligand>
</feature>
<feature type="binding site" evidence="1">
    <location>
        <begin position="318"/>
        <end position="321"/>
    </location>
    <ligand>
        <name>GTP</name>
        <dbReference type="ChEBI" id="CHEBI:37565"/>
    </ligand>
</feature>
<feature type="mutagenesis site" description="Reduced binding to the thylakoid and 80% reduction of LHCP integration in thylakoids, but no effect on GTP binding. Reduced binding to the thylakoid and 80% reduction of LHCP integration in thylakoids; when associated with A-49.">
    <original>F</original>
    <variation>A</variation>
    <location>
        <position position="48"/>
    </location>
</feature>
<feature type="mutagenesis site" description="Severe reduction of LHCP integration in thylakoids.">
    <original>F</original>
    <variation>G</variation>
    <variation>E</variation>
    <variation>Q</variation>
    <variation>K</variation>
    <location>
        <position position="48"/>
    </location>
</feature>
<feature type="mutagenesis site" description="No or limited reduction of LHCP integration in thylakoids.">
    <original>F</original>
    <variation>L</variation>
    <variation>V</variation>
    <variation>Y</variation>
    <variation>W</variation>
    <location>
        <position position="48"/>
    </location>
</feature>
<feature type="mutagenesis site" description="Reduced binding to the thylakoid and 40% reduction of LHCP integration in thylakoids. Reduced binding to the thylakoid and 80% reduction of LHCP integration in thylakoids; when associated with A-48.">
    <original>F</original>
    <variation>A</variation>
    <location>
        <position position="49"/>
    </location>
</feature>
<feature type="mutagenesis site" description="Reduced binding to the thylakoid and LHCP integration in thylakoids; when associated with A-54." evidence="11">
    <original>R</original>
    <variation>A</variation>
    <location>
        <position position="51"/>
    </location>
</feature>
<feature type="mutagenesis site" description="Reduced binding to the thylakoid and LHCP integration in thylakoids." evidence="11">
    <original>L</original>
    <variation>A</variation>
    <variation>Q</variation>
    <location>
        <position position="52"/>
    </location>
</feature>
<feature type="mutagenesis site" description="Reduced binding to the thylakoid and LHCP integration in thylakoids; when associated with A-51." evidence="11">
    <original>R</original>
    <variation>A</variation>
    <location>
        <position position="54"/>
    </location>
</feature>
<feature type="mutagenesis site" description="Reduced binding to the thylakoid and LHCP integration in thylakoids." evidence="11">
    <original>I</original>
    <variation>A</variation>
    <location>
        <position position="56"/>
    </location>
</feature>
<feature type="mutagenesis site" description="Reduced interaction with FFC, but no effect on the basal GTPase activity." evidence="9 12">
    <original>F</original>
    <variation>V</variation>
    <variation>A</variation>
    <variation>L</variation>
    <location>
        <position position="71"/>
    </location>
</feature>
<feature type="mutagenesis site" description="Reduced interaction with FFC." evidence="9">
    <original>F</original>
    <variation>V</variation>
    <location>
        <position position="109"/>
    </location>
</feature>
<feature type="mutagenesis site" description="Loss of GTP binding specificity." evidence="8">
    <original>D</original>
    <variation>N</variation>
    <location>
        <position position="321"/>
    </location>
</feature>
<feature type="mutagenesis site" description="Reduced interaction with FFC, but no effect on the basal GTPase activity." evidence="12">
    <original>G</original>
    <variation>W</variation>
    <location>
        <position position="326"/>
    </location>
</feature>
<feature type="mutagenesis site" description="In frd4-2; chlorotic and reduction in thylakoid membrane content and stacking." evidence="7">
    <original>G</original>
    <variation>D</variation>
    <location>
        <position position="344"/>
    </location>
</feature>
<feature type="sequence conflict" description="In Ref. 2 and 15; AAD47910." evidence="13" ref="2 15">
    <original>L</original>
    <variation>F</variation>
    <location>
        <position position="8"/>
    </location>
</feature>
<feature type="helix" evidence="15">
    <location>
        <begin position="66"/>
        <end position="70"/>
    </location>
</feature>
<feature type="helix" evidence="15">
    <location>
        <begin position="72"/>
        <end position="78"/>
    </location>
</feature>
<feature type="helix" evidence="15">
    <location>
        <begin position="80"/>
        <end position="85"/>
    </location>
</feature>
<feature type="helix" evidence="15">
    <location>
        <begin position="90"/>
        <end position="92"/>
    </location>
</feature>
<feature type="helix" evidence="15">
    <location>
        <begin position="93"/>
        <end position="106"/>
    </location>
</feature>
<feature type="helix" evidence="15">
    <location>
        <begin position="111"/>
        <end position="126"/>
    </location>
</feature>
<feature type="helix" evidence="15">
    <location>
        <begin position="133"/>
        <end position="148"/>
    </location>
</feature>
<feature type="strand" evidence="15">
    <location>
        <begin position="161"/>
        <end position="163"/>
    </location>
</feature>
<feature type="strand" evidence="15">
    <location>
        <begin position="165"/>
        <end position="170"/>
    </location>
</feature>
<feature type="helix" evidence="15">
    <location>
        <begin position="177"/>
        <end position="190"/>
    </location>
</feature>
<feature type="strand" evidence="15">
    <location>
        <begin position="195"/>
        <end position="198"/>
    </location>
</feature>
<feature type="helix" evidence="15">
    <location>
        <begin position="205"/>
        <end position="218"/>
    </location>
</feature>
<feature type="strand" evidence="15">
    <location>
        <begin position="221"/>
        <end position="223"/>
    </location>
</feature>
<feature type="strand" evidence="14">
    <location>
        <begin position="226"/>
        <end position="229"/>
    </location>
</feature>
<feature type="helix" evidence="15">
    <location>
        <begin position="232"/>
        <end position="245"/>
    </location>
</feature>
<feature type="strand" evidence="15">
    <location>
        <begin position="249"/>
        <end position="253"/>
    </location>
</feature>
<feature type="helix" evidence="15">
    <location>
        <begin position="263"/>
        <end position="277"/>
    </location>
</feature>
<feature type="strand" evidence="15">
    <location>
        <begin position="285"/>
        <end position="292"/>
    </location>
</feature>
<feature type="helix" evidence="15">
    <location>
        <begin position="293"/>
        <end position="299"/>
    </location>
</feature>
<feature type="helix" evidence="15">
    <location>
        <begin position="300"/>
        <end position="309"/>
    </location>
</feature>
<feature type="strand" evidence="15">
    <location>
        <begin position="314"/>
        <end position="318"/>
    </location>
</feature>
<feature type="helix" evidence="15">
    <location>
        <begin position="327"/>
        <end position="336"/>
    </location>
</feature>
<feature type="strand" evidence="15">
    <location>
        <begin position="340"/>
        <end position="344"/>
    </location>
</feature>
<feature type="strand" evidence="15">
    <location>
        <begin position="346"/>
        <end position="348"/>
    </location>
</feature>
<feature type="helix" evidence="15">
    <location>
        <begin position="349"/>
        <end position="351"/>
    </location>
</feature>
<feature type="strand" evidence="15">
    <location>
        <begin position="352"/>
        <end position="354"/>
    </location>
</feature>
<feature type="helix" evidence="15">
    <location>
        <begin position="357"/>
        <end position="365"/>
    </location>
</feature>
<accession>O80842</accession>
<accession>F4IH43</accession>
<accession>Q9SWS7</accession>
<accession>Q9XFR1</accession>
<dbReference type="EMBL" id="AJ010820">
    <property type="protein sequence ID" value="CAB40382.1"/>
    <property type="molecule type" value="mRNA"/>
</dbReference>
<dbReference type="EMBL" id="AF120112">
    <property type="protein sequence ID" value="AAD47910.1"/>
    <property type="molecule type" value="mRNA"/>
</dbReference>
<dbReference type="EMBL" id="AC004665">
    <property type="protein sequence ID" value="AAC28547.2"/>
    <property type="molecule type" value="Genomic_DNA"/>
</dbReference>
<dbReference type="EMBL" id="CP002685">
    <property type="protein sequence ID" value="AEC10599.1"/>
    <property type="molecule type" value="Genomic_DNA"/>
</dbReference>
<dbReference type="EMBL" id="AF360125">
    <property type="protein sequence ID" value="AAK25835.1"/>
    <property type="molecule type" value="mRNA"/>
</dbReference>
<dbReference type="EMBL" id="AY051026">
    <property type="protein sequence ID" value="AAK93703.1"/>
    <property type="molecule type" value="mRNA"/>
</dbReference>
<dbReference type="PIR" id="T02470">
    <property type="entry name" value="T02470"/>
</dbReference>
<dbReference type="PIR" id="T52612">
    <property type="entry name" value="T52612"/>
</dbReference>
<dbReference type="RefSeq" id="NP_566056.1">
    <property type="nucleotide sequence ID" value="NM_130140.3"/>
</dbReference>
<dbReference type="PDB" id="2OG2">
    <property type="method" value="X-ray"/>
    <property type="resolution" value="2.00 A"/>
    <property type="chains" value="A=41-366"/>
</dbReference>
<dbReference type="PDB" id="3B9Q">
    <property type="method" value="X-ray"/>
    <property type="resolution" value="1.75 A"/>
    <property type="chains" value="A=65-366"/>
</dbReference>
<dbReference type="PDB" id="5L3R">
    <property type="method" value="X-ray"/>
    <property type="resolution" value="2.50 A"/>
    <property type="chains" value="B/D=80-366"/>
</dbReference>
<dbReference type="PDB" id="8RIX">
    <property type="method" value="X-ray"/>
    <property type="resolution" value="1.99 A"/>
    <property type="chains" value="A=65-366"/>
</dbReference>
<dbReference type="PDBsum" id="2OG2"/>
<dbReference type="PDBsum" id="3B9Q"/>
<dbReference type="PDBsum" id="5L3R"/>
<dbReference type="PDBsum" id="8RIX"/>
<dbReference type="SMR" id="O80842"/>
<dbReference type="BioGRID" id="4521">
    <property type="interactions" value="5"/>
</dbReference>
<dbReference type="FunCoup" id="O80842">
    <property type="interactions" value="843"/>
</dbReference>
<dbReference type="IntAct" id="O80842">
    <property type="interactions" value="6"/>
</dbReference>
<dbReference type="MINT" id="O80842"/>
<dbReference type="STRING" id="3702.O80842"/>
<dbReference type="TCDB" id="3.A.5.1.2">
    <property type="family name" value="the general secretory pathway (sec) family"/>
</dbReference>
<dbReference type="iPTMnet" id="O80842"/>
<dbReference type="PaxDb" id="3702-AT2G45770.2"/>
<dbReference type="ProteomicsDB" id="220474"/>
<dbReference type="EnsemblPlants" id="AT2G45770.1">
    <property type="protein sequence ID" value="AT2G45770.1"/>
    <property type="gene ID" value="AT2G45770"/>
</dbReference>
<dbReference type="GeneID" id="819185"/>
<dbReference type="Gramene" id="AT2G45770.1">
    <property type="protein sequence ID" value="AT2G45770.1"/>
    <property type="gene ID" value="AT2G45770"/>
</dbReference>
<dbReference type="KEGG" id="ath:AT2G45770"/>
<dbReference type="Araport" id="AT2G45770"/>
<dbReference type="TAIR" id="AT2G45770">
    <property type="gene designation" value="CPFTSY"/>
</dbReference>
<dbReference type="eggNOG" id="KOG0780">
    <property type="taxonomic scope" value="Eukaryota"/>
</dbReference>
<dbReference type="InParanoid" id="O80842"/>
<dbReference type="OMA" id="GISDQFQ"/>
<dbReference type="OrthoDB" id="1727884at2759"/>
<dbReference type="PhylomeDB" id="O80842"/>
<dbReference type="EvolutionaryTrace" id="O80842"/>
<dbReference type="PRO" id="PR:O80842"/>
<dbReference type="Proteomes" id="UP000006548">
    <property type="component" value="Chromosome 2"/>
</dbReference>
<dbReference type="ExpressionAtlas" id="O80842">
    <property type="expression patterns" value="baseline and differential"/>
</dbReference>
<dbReference type="GO" id="GO:0009570">
    <property type="term" value="C:chloroplast stroma"/>
    <property type="evidence" value="ECO:0007669"/>
    <property type="project" value="UniProtKB-SubCell"/>
</dbReference>
<dbReference type="GO" id="GO:0009535">
    <property type="term" value="C:chloroplast thylakoid membrane"/>
    <property type="evidence" value="ECO:0007669"/>
    <property type="project" value="UniProtKB-SubCell"/>
</dbReference>
<dbReference type="GO" id="GO:0016887">
    <property type="term" value="F:ATP hydrolysis activity"/>
    <property type="evidence" value="ECO:0007669"/>
    <property type="project" value="InterPro"/>
</dbReference>
<dbReference type="GO" id="GO:0005525">
    <property type="term" value="F:GTP binding"/>
    <property type="evidence" value="ECO:0007669"/>
    <property type="project" value="UniProtKB-KW"/>
</dbReference>
<dbReference type="GO" id="GO:0046872">
    <property type="term" value="F:metal ion binding"/>
    <property type="evidence" value="ECO:0007669"/>
    <property type="project" value="UniProtKB-KW"/>
</dbReference>
<dbReference type="GO" id="GO:0006614">
    <property type="term" value="P:SRP-dependent cotranslational protein targeting to membrane"/>
    <property type="evidence" value="ECO:0007669"/>
    <property type="project" value="InterPro"/>
</dbReference>
<dbReference type="CDD" id="cd17874">
    <property type="entry name" value="FtsY"/>
    <property type="match status" value="1"/>
</dbReference>
<dbReference type="FunFam" id="1.20.120.140:FF:000006">
    <property type="entry name" value="Cell division FtsY, chloroplastic-like protein"/>
    <property type="match status" value="1"/>
</dbReference>
<dbReference type="FunFam" id="3.40.50.300:FF:000053">
    <property type="entry name" value="Signal recognition particle receptor FtsY"/>
    <property type="match status" value="1"/>
</dbReference>
<dbReference type="Gene3D" id="3.40.50.300">
    <property type="entry name" value="P-loop containing nucleotide triphosphate hydrolases"/>
    <property type="match status" value="1"/>
</dbReference>
<dbReference type="Gene3D" id="1.20.120.140">
    <property type="entry name" value="Signal recognition particle SRP54, nucleotide-binding domain"/>
    <property type="match status" value="1"/>
</dbReference>
<dbReference type="InterPro" id="IPR003593">
    <property type="entry name" value="AAA+_ATPase"/>
</dbReference>
<dbReference type="InterPro" id="IPR027417">
    <property type="entry name" value="P-loop_NTPase"/>
</dbReference>
<dbReference type="InterPro" id="IPR013822">
    <property type="entry name" value="Signal_recog_particl_SRP54_hlx"/>
</dbReference>
<dbReference type="InterPro" id="IPR004390">
    <property type="entry name" value="SR_rcpt_FtsY"/>
</dbReference>
<dbReference type="InterPro" id="IPR036225">
    <property type="entry name" value="SRP/SRP_N"/>
</dbReference>
<dbReference type="InterPro" id="IPR000897">
    <property type="entry name" value="SRP54_GTPase_dom"/>
</dbReference>
<dbReference type="InterPro" id="IPR042101">
    <property type="entry name" value="SRP54_N_sf"/>
</dbReference>
<dbReference type="NCBIfam" id="TIGR00064">
    <property type="entry name" value="ftsY"/>
    <property type="match status" value="1"/>
</dbReference>
<dbReference type="PANTHER" id="PTHR43134:SF7">
    <property type="entry name" value="CELL DIVISION PROTEIN FTSY HOMOLOG, CHLOROPLASTIC"/>
    <property type="match status" value="1"/>
</dbReference>
<dbReference type="PANTHER" id="PTHR43134">
    <property type="entry name" value="SIGNAL RECOGNITION PARTICLE RECEPTOR SUBUNIT ALPHA"/>
    <property type="match status" value="1"/>
</dbReference>
<dbReference type="Pfam" id="PF00448">
    <property type="entry name" value="SRP54"/>
    <property type="match status" value="1"/>
</dbReference>
<dbReference type="Pfam" id="PF02881">
    <property type="entry name" value="SRP54_N"/>
    <property type="match status" value="1"/>
</dbReference>
<dbReference type="SMART" id="SM00382">
    <property type="entry name" value="AAA"/>
    <property type="match status" value="1"/>
</dbReference>
<dbReference type="SMART" id="SM00962">
    <property type="entry name" value="SRP54"/>
    <property type="match status" value="1"/>
</dbReference>
<dbReference type="SMART" id="SM00963">
    <property type="entry name" value="SRP54_N"/>
    <property type="match status" value="1"/>
</dbReference>
<dbReference type="SUPFAM" id="SSF47364">
    <property type="entry name" value="Domain of the SRP/SRP receptor G-proteins"/>
    <property type="match status" value="1"/>
</dbReference>
<dbReference type="SUPFAM" id="SSF52540">
    <property type="entry name" value="P-loop containing nucleoside triphosphate hydrolases"/>
    <property type="match status" value="1"/>
</dbReference>
<dbReference type="PROSITE" id="PS00300">
    <property type="entry name" value="SRP54"/>
    <property type="match status" value="1"/>
</dbReference>
<comment type="function">
    <text evidence="3 4 5 8 10 11">Signal recognition particle receptor protein. Binds GTP specifically. The GTPase activity is inhibited by the N-terminus of the protein until binding to the thylakoid membrane. Activates the GTPase activity of FFC/cpSRP54 when bound to the cpSRP complex. Required for light-harvesting chlorophyll a/b-binding protein (LHCP) integration into thylakoids. Might be also functionally linked to the Sec translocation machinery.</text>
</comment>
<comment type="subunit">
    <text evidence="4 6 8 12">Monomer. Interacts with FFC/cpSRP54, a component of the cpSRP complex, composed of a FFC/cpSRP54 monomer and a CAO/cpSRP43 dimer. The complex with FFC/cpSRP54 is formed when both proteins are bound with GTP.</text>
</comment>
<comment type="interaction">
    <interactant intactId="EBI-2353373">
        <id>O80842</id>
    </interactant>
    <interactant intactId="EBI-1806831">
        <id>Q8LBP4</id>
        <label>ALB3</label>
    </interactant>
    <organismsDiffer>false</organismsDiffer>
    <experiments>2</experiments>
</comment>
<comment type="subcellular location">
    <subcellularLocation>
        <location>Plastid</location>
        <location>Chloroplast stroma</location>
    </subcellularLocation>
    <subcellularLocation>
        <location>Plastid</location>
        <location>Chloroplast thylakoid membrane</location>
        <topology>Peripheral membrane protein</topology>
        <orientation>Stromal side</orientation>
    </subcellularLocation>
    <text>The membrane-binding domain is capable of partial insertion into the lipid bilayer.</text>
</comment>
<comment type="tissue specificity">
    <text evidence="7 10">Expressed in green tissues. Low levels in roots and seeds.</text>
</comment>
<comment type="developmental stage">
    <text evidence="10">Peak of expression 20 days after germination.</text>
</comment>
<comment type="induction">
    <text evidence="7 10">Not induced by light or iron.</text>
</comment>
<comment type="domain">
    <text evidence="11">The N-terminal domain (39-56) is necessary and sufficient for thylakoid binding.</text>
</comment>
<comment type="disruption phenotype">
    <text evidence="10">Seedling lethal.</text>
</comment>
<comment type="miscellaneous">
    <text>Unlike eukaryotic or prokaryotic signal recognition particle (SRP), the chloroplast SRP from higher plants lacks an SRP-RNA component. It targets both chloroplast-encoded and nucleus-encoded substrates to the thylakoid membrane, post-translationally for the nucleus-encoded proteins and co-translationally for the chloroplast-encoded proteins.</text>
</comment>
<comment type="similarity">
    <text evidence="13">Belongs to the GTP-binding SRP family.</text>
</comment>
<reference key="1">
    <citation type="journal article" date="1999" name="FEBS Lett.">
        <title>Involvement of a chloroplast homologue of the signal recognition particle receptor protein, FtsY, in protein targeting to thylakoids.</title>
        <authorList>
            <person name="Kogata N."/>
            <person name="Nishio K."/>
            <person name="Hirohashi T."/>
            <person name="Kikuchi S."/>
            <person name="Nakai M."/>
        </authorList>
    </citation>
    <scope>NUCLEOTIDE SEQUENCE [MRNA]</scope>
    <scope>FUNCTION</scope>
    <scope>SUBCELLULAR LOCATION</scope>
    <source>
        <strain>cv. Columbia</strain>
    </source>
</reference>
<reference key="2">
    <citation type="submission" date="1999-01" db="EMBL/GenBank/DDBJ databases">
        <title>CPFTSY signal recognition particle receptor homolog.</title>
        <authorList>
            <person name="Peterson E.C."/>
            <person name="Henry R.L."/>
        </authorList>
    </citation>
    <scope>NUCLEOTIDE SEQUENCE [MRNA]</scope>
    <source>
        <strain>cv. Wassilewskija</strain>
    </source>
</reference>
<reference key="3">
    <citation type="journal article" date="1999" name="Nature">
        <title>Sequence and analysis of chromosome 2 of the plant Arabidopsis thaliana.</title>
        <authorList>
            <person name="Lin X."/>
            <person name="Kaul S."/>
            <person name="Rounsley S.D."/>
            <person name="Shea T.P."/>
            <person name="Benito M.-I."/>
            <person name="Town C.D."/>
            <person name="Fujii C.Y."/>
            <person name="Mason T.M."/>
            <person name="Bowman C.L."/>
            <person name="Barnstead M.E."/>
            <person name="Feldblyum T.V."/>
            <person name="Buell C.R."/>
            <person name="Ketchum K.A."/>
            <person name="Lee J.J."/>
            <person name="Ronning C.M."/>
            <person name="Koo H.L."/>
            <person name="Moffat K.S."/>
            <person name="Cronin L.A."/>
            <person name="Shen M."/>
            <person name="Pai G."/>
            <person name="Van Aken S."/>
            <person name="Umayam L."/>
            <person name="Tallon L.J."/>
            <person name="Gill J.E."/>
            <person name="Adams M.D."/>
            <person name="Carrera A.J."/>
            <person name="Creasy T.H."/>
            <person name="Goodman H.M."/>
            <person name="Somerville C.R."/>
            <person name="Copenhaver G.P."/>
            <person name="Preuss D."/>
            <person name="Nierman W.C."/>
            <person name="White O."/>
            <person name="Eisen J.A."/>
            <person name="Salzberg S.L."/>
            <person name="Fraser C.M."/>
            <person name="Venter J.C."/>
        </authorList>
    </citation>
    <scope>NUCLEOTIDE SEQUENCE [LARGE SCALE GENOMIC DNA]</scope>
    <source>
        <strain>cv. Columbia</strain>
    </source>
</reference>
<reference key="4">
    <citation type="journal article" date="2017" name="Plant J.">
        <title>Araport11: a complete reannotation of the Arabidopsis thaliana reference genome.</title>
        <authorList>
            <person name="Cheng C.Y."/>
            <person name="Krishnakumar V."/>
            <person name="Chan A.P."/>
            <person name="Thibaud-Nissen F."/>
            <person name="Schobel S."/>
            <person name="Town C.D."/>
        </authorList>
    </citation>
    <scope>GENOME REANNOTATION</scope>
    <source>
        <strain>cv. Columbia</strain>
    </source>
</reference>
<reference key="5">
    <citation type="journal article" date="2003" name="Science">
        <title>Empirical analysis of transcriptional activity in the Arabidopsis genome.</title>
        <authorList>
            <person name="Yamada K."/>
            <person name="Lim J."/>
            <person name="Dale J.M."/>
            <person name="Chen H."/>
            <person name="Shinn P."/>
            <person name="Palm C.J."/>
            <person name="Southwick A.M."/>
            <person name="Wu H.C."/>
            <person name="Kim C.J."/>
            <person name="Nguyen M."/>
            <person name="Pham P.K."/>
            <person name="Cheuk R.F."/>
            <person name="Karlin-Newmann G."/>
            <person name="Liu S.X."/>
            <person name="Lam B."/>
            <person name="Sakano H."/>
            <person name="Wu T."/>
            <person name="Yu G."/>
            <person name="Miranda M."/>
            <person name="Quach H.L."/>
            <person name="Tripp M."/>
            <person name="Chang C.H."/>
            <person name="Lee J.M."/>
            <person name="Toriumi M.J."/>
            <person name="Chan M.M."/>
            <person name="Tang C.C."/>
            <person name="Onodera C.S."/>
            <person name="Deng J.M."/>
            <person name="Akiyama K."/>
            <person name="Ansari Y."/>
            <person name="Arakawa T."/>
            <person name="Banh J."/>
            <person name="Banno F."/>
            <person name="Bowser L."/>
            <person name="Brooks S.Y."/>
            <person name="Carninci P."/>
            <person name="Chao Q."/>
            <person name="Choy N."/>
            <person name="Enju A."/>
            <person name="Goldsmith A.D."/>
            <person name="Gurjal M."/>
            <person name="Hansen N.F."/>
            <person name="Hayashizaki Y."/>
            <person name="Johnson-Hopson C."/>
            <person name="Hsuan V.W."/>
            <person name="Iida K."/>
            <person name="Karnes M."/>
            <person name="Khan S."/>
            <person name="Koesema E."/>
            <person name="Ishida J."/>
            <person name="Jiang P.X."/>
            <person name="Jones T."/>
            <person name="Kawai J."/>
            <person name="Kamiya A."/>
            <person name="Meyers C."/>
            <person name="Nakajima M."/>
            <person name="Narusaka M."/>
            <person name="Seki M."/>
            <person name="Sakurai T."/>
            <person name="Satou M."/>
            <person name="Tamse R."/>
            <person name="Vaysberg M."/>
            <person name="Wallender E.K."/>
            <person name="Wong C."/>
            <person name="Yamamura Y."/>
            <person name="Yuan S."/>
            <person name="Shinozaki K."/>
            <person name="Davis R.W."/>
            <person name="Theologis A."/>
            <person name="Ecker J.R."/>
        </authorList>
    </citation>
    <scope>NUCLEOTIDE SEQUENCE [LARGE SCALE MRNA]</scope>
    <source>
        <strain>cv. Columbia</strain>
    </source>
</reference>
<reference key="6">
    <citation type="journal article" date="1999" name="J. Biol. Chem.">
        <title>Chloroplast FtsY, chloroplast signal recognition particle, and GTP are required to reconstitute the soluble phase of light-harvesting chlorophyll protein transport into thylakoid membranes.</title>
        <authorList>
            <person name="Tu C.J."/>
            <person name="Schuenemann D."/>
            <person name="Hoffman N.E."/>
        </authorList>
    </citation>
    <scope>FUNCTION</scope>
    <scope>SUBCELLULAR LOCATION</scope>
    <scope>SUBUNIT</scope>
</reference>
<reference key="7">
    <citation type="journal article" date="2002" name="J. Biol. Chem.">
        <title>ATP stimulates signal recognition particle (SRP)/FtsY-supported protein integration in chloroplasts.</title>
        <authorList>
            <person name="Yuan J."/>
            <person name="Kight A."/>
            <person name="Goforth R.L."/>
            <person name="Moore M."/>
            <person name="Peterson E.C."/>
            <person name="Sakon J."/>
            <person name="Henry R."/>
        </authorList>
    </citation>
    <scope>FUNCTION</scope>
</reference>
<reference key="8">
    <citation type="journal article" date="2003" name="J. Cell Biol.">
        <title>Functional interaction of chloroplast SRP/FtsY with the ALB3 translocase in thylakoids: substrate not required.</title>
        <authorList>
            <person name="Moore M."/>
            <person name="Goforth R.L."/>
            <person name="Mori H."/>
            <person name="Henry R."/>
        </authorList>
    </citation>
    <scope>INTERACTION WITH ALB3</scope>
</reference>
<reference key="9">
    <citation type="journal article" date="2006" name="Plant J.">
        <title>Arabidopsis cpFtsY mutants exhibit pleiotropic defects including an inability to increase iron deficiency-inducible root Fe(III) chelate reductase activity.</title>
        <authorList>
            <person name="Durrett T.P."/>
            <person name="Connolly E.L."/>
            <person name="Rogers E.E."/>
        </authorList>
    </citation>
    <scope>MUTAGENESIS OF GLY-344</scope>
    <scope>TISSUE SPECIFICITY</scope>
    <scope>INDUCTION BY IRON</scope>
    <scope>SUBCELLULAR LOCATION</scope>
</reference>
<reference key="10">
    <citation type="journal article" date="2007" name="Mol. Biol. Cell">
        <title>Efficient interaction between two GTPases allows the chloroplast SRP pathway to bypass the requirement for an SRP RNA.</title>
        <authorList>
            <person name="Jaru-Ampornpan P."/>
            <person name="Chandrasekar S."/>
            <person name="Shan S.O."/>
        </authorList>
    </citation>
    <scope>FUNCTION</scope>
    <scope>MUTAGENESIS OF ASP-321</scope>
    <scope>INTERACTION WITH CPSRP54/FFC</scope>
</reference>
<reference key="11">
    <citation type="journal article" date="2008" name="Plant J.">
        <title>Non-identical contributions of two membrane-bound cpSRP components, cpFtsY and Alb3, to thylakoid biogenesis.</title>
        <authorList>
            <person name="Asakura Y."/>
            <person name="Kikuchi S."/>
            <person name="Nakai M."/>
        </authorList>
    </citation>
    <scope>FUNCTION</scope>
    <scope>DISRUPTION PHENOTYPE</scope>
    <scope>DEVELOPMENTAL STAGE</scope>
    <scope>INDUCTION</scope>
    <scope>TISSUE SPECIFICITY</scope>
    <scope>SUBCELLULAR LOCATION</scope>
</reference>
<reference key="12">
    <citation type="journal article" date="2009" name="J. Biol. Chem.">
        <title>The membrane-binding motif of the chloroplast signal recognition particle receptor (cpFtsY) regulates GTPase activity.</title>
        <authorList>
            <person name="Marty N.J."/>
            <person name="Rajalingam D."/>
            <person name="Kight A.D."/>
            <person name="Lewis N.E."/>
            <person name="Fologea D."/>
            <person name="Kumar T.K."/>
            <person name="Henry R.L."/>
            <person name="Goforth R.L."/>
        </authorList>
    </citation>
    <scope>FUNCTION</scope>
    <scope>DOMAIN</scope>
    <scope>MUTAGENESIS OF 48-PHE-PHE-49; ARG-51; LEU-52; ARG-54 AND ILE-56</scope>
    <scope>STRUCTURE BY NMR OF 39-56</scope>
</reference>
<reference key="13">
    <citation type="journal article" date="2009" name="Mol. Biol. Cell">
        <title>A distinct mechanism to achieve efficient signal recognition particle (SRP)-SRP receptor interaction by the chloroplast srp pathway.</title>
        <authorList>
            <person name="Jaru-Ampornpan P."/>
            <person name="Nguyen T.X."/>
            <person name="Shan S.O."/>
        </authorList>
    </citation>
    <scope>INTERACTION WITH CPSRP54/FFC</scope>
    <scope>MUTAGENESIS OF PHE-71 AND GLY-326</scope>
</reference>
<reference key="14">
    <citation type="journal article" date="2011" name="J. Struct. Biol.">
        <title>Molecular dynamics simulation reveals preorganization of the chloroplast FtsY towards complex formation induced by GTP binding.</title>
        <authorList>
            <person name="Yang M.J."/>
            <person name="Pang X.Q."/>
            <person name="Zhang X."/>
            <person name="Han K.L."/>
        </authorList>
    </citation>
    <scope>3D-STRUCTURE MODELING</scope>
</reference>
<reference key="15">
    <citation type="journal article" date="2007" name="FEBS Lett.">
        <title>The structure of the chloroplast signal recognition particle (SRP) receptor reveals mechanistic details of SRP GTPase activation and a conserved membrane targeting site.</title>
        <authorList>
            <person name="Stengel K.F."/>
            <person name="Holdermann I."/>
            <person name="Wild K."/>
            <person name="Sinning I."/>
        </authorList>
    </citation>
    <scope>X-RAY CRYSTALLOGRAPHY (1.75 ANGSTROMS) OF 65-366</scope>
</reference>
<reference key="16">
    <citation type="journal article" date="2008" name="J. Mol. Biol.">
        <title>Structure of the chloroplast signal recognition particle (cpSRP) receptor: domain arrangement modulates SRP-receptor interaction.</title>
        <authorList>
            <person name="Chandrasekar S."/>
            <person name="Chartron J."/>
            <person name="Jaru-Ampornpan P."/>
            <person name="Shan S.O."/>
        </authorList>
    </citation>
    <scope>X-RAY CRYSTALLOGRAPHY (2.00 ANGSTROMS) OF 41-366</scope>
    <scope>MUTAGENESIS OF PHE-71 AND PHE-109</scope>
</reference>